<protein>
    <recommendedName>
        <fullName evidence="1">Chaperone protein DnaJ</fullName>
    </recommendedName>
</protein>
<gene>
    <name evidence="1" type="primary">dnaJ</name>
    <name type="ordered locus">BCB4264_A4432</name>
</gene>
<reference key="1">
    <citation type="submission" date="2008-10" db="EMBL/GenBank/DDBJ databases">
        <title>Genome sequence of Bacillus cereus B4264.</title>
        <authorList>
            <person name="Dodson R.J."/>
            <person name="Durkin A.S."/>
            <person name="Rosovitz M.J."/>
            <person name="Rasko D.A."/>
            <person name="Hoffmaster A."/>
            <person name="Ravel J."/>
            <person name="Sutton G."/>
        </authorList>
    </citation>
    <scope>NUCLEOTIDE SEQUENCE [LARGE SCALE GENOMIC DNA]</scope>
    <source>
        <strain>B4264</strain>
    </source>
</reference>
<comment type="function">
    <text evidence="1">Participates actively in the response to hyperosmotic and heat shock by preventing the aggregation of stress-denatured proteins and by disaggregating proteins, also in an autonomous, DnaK-independent fashion. Unfolded proteins bind initially to DnaJ; upon interaction with the DnaJ-bound protein, DnaK hydrolyzes its bound ATP, resulting in the formation of a stable complex. GrpE releases ADP from DnaK; ATP binding to DnaK triggers the release of the substrate protein, thus completing the reaction cycle. Several rounds of ATP-dependent interactions between DnaJ, DnaK and GrpE are required for fully efficient folding. Also involved, together with DnaK and GrpE, in the DNA replication of plasmids through activation of initiation proteins.</text>
</comment>
<comment type="cofactor">
    <cofactor evidence="1">
        <name>Zn(2+)</name>
        <dbReference type="ChEBI" id="CHEBI:29105"/>
    </cofactor>
    <text evidence="1">Binds 2 Zn(2+) ions per monomer.</text>
</comment>
<comment type="subunit">
    <text evidence="1">Homodimer.</text>
</comment>
<comment type="subcellular location">
    <subcellularLocation>
        <location evidence="1">Cytoplasm</location>
    </subcellularLocation>
</comment>
<comment type="domain">
    <text evidence="1">The J domain is necessary and sufficient to stimulate DnaK ATPase activity. Zinc center 1 plays an important role in the autonomous, DnaK-independent chaperone activity of DnaJ. Zinc center 2 is essential for interaction with DnaK and for DnaJ activity.</text>
</comment>
<comment type="similarity">
    <text evidence="1">Belongs to the DnaJ family.</text>
</comment>
<evidence type="ECO:0000255" key="1">
    <source>
        <dbReference type="HAMAP-Rule" id="MF_01152"/>
    </source>
</evidence>
<keyword id="KW-0143">Chaperone</keyword>
<keyword id="KW-0963">Cytoplasm</keyword>
<keyword id="KW-0235">DNA replication</keyword>
<keyword id="KW-0479">Metal-binding</keyword>
<keyword id="KW-0677">Repeat</keyword>
<keyword id="KW-0346">Stress response</keyword>
<keyword id="KW-0862">Zinc</keyword>
<keyword id="KW-0863">Zinc-finger</keyword>
<proteinExistence type="inferred from homology"/>
<accession>B7HCT9</accession>
<name>DNAJ_BACC4</name>
<organism>
    <name type="scientific">Bacillus cereus (strain B4264)</name>
    <dbReference type="NCBI Taxonomy" id="405532"/>
    <lineage>
        <taxon>Bacteria</taxon>
        <taxon>Bacillati</taxon>
        <taxon>Bacillota</taxon>
        <taxon>Bacilli</taxon>
        <taxon>Bacillales</taxon>
        <taxon>Bacillaceae</taxon>
        <taxon>Bacillus</taxon>
        <taxon>Bacillus cereus group</taxon>
    </lineage>
</organism>
<sequence>MSKRDYYEVLGLSKGASTDEIKKAYRRLAKKYHPDVSKEENAIEKFKEVQEAYEVLSDDQKRAQYDQFGHAGANQGFGGFGGGGDFGGGFGFEDIFSSFFGGGGGRRRDPNAPRQGADLQYQVTLDFEEAIFGKELNVEIPVEDPCDTCKGSGAKPGTSKETCKHCSGSGQVSVEQNTPFGRIVNRQACGHCSGTGQIIKEKCTTCHGSGKVRKRKKINVKIPAGIDNGQQIRVSGKGEAGVNGGPAGDLYVVVHVRNHEFFEREGDHIICEMPLTFAQMALGDEVEVPTVHGKVKLKIPAGTQTGTEFRLKGKGAPNVRGYGQGDQYVVVRVVVPTKLTSQQKDLLREFAGQEEQDDSLFGKLKRAFKGE</sequence>
<dbReference type="EMBL" id="CP001176">
    <property type="protein sequence ID" value="ACK59500.1"/>
    <property type="molecule type" value="Genomic_DNA"/>
</dbReference>
<dbReference type="RefSeq" id="WP_000043947.1">
    <property type="nucleotide sequence ID" value="NZ_VEHB01000006.1"/>
</dbReference>
<dbReference type="SMR" id="B7HCT9"/>
<dbReference type="GeneID" id="72450995"/>
<dbReference type="KEGG" id="bcb:BCB4264_A4432"/>
<dbReference type="HOGENOM" id="CLU_017633_0_7_9"/>
<dbReference type="Proteomes" id="UP000007096">
    <property type="component" value="Chromosome"/>
</dbReference>
<dbReference type="GO" id="GO:0005737">
    <property type="term" value="C:cytoplasm"/>
    <property type="evidence" value="ECO:0007669"/>
    <property type="project" value="UniProtKB-SubCell"/>
</dbReference>
<dbReference type="GO" id="GO:0005524">
    <property type="term" value="F:ATP binding"/>
    <property type="evidence" value="ECO:0007669"/>
    <property type="project" value="InterPro"/>
</dbReference>
<dbReference type="GO" id="GO:0031072">
    <property type="term" value="F:heat shock protein binding"/>
    <property type="evidence" value="ECO:0007669"/>
    <property type="project" value="InterPro"/>
</dbReference>
<dbReference type="GO" id="GO:0051082">
    <property type="term" value="F:unfolded protein binding"/>
    <property type="evidence" value="ECO:0007669"/>
    <property type="project" value="UniProtKB-UniRule"/>
</dbReference>
<dbReference type="GO" id="GO:0008270">
    <property type="term" value="F:zinc ion binding"/>
    <property type="evidence" value="ECO:0007669"/>
    <property type="project" value="UniProtKB-UniRule"/>
</dbReference>
<dbReference type="GO" id="GO:0051085">
    <property type="term" value="P:chaperone cofactor-dependent protein refolding"/>
    <property type="evidence" value="ECO:0007669"/>
    <property type="project" value="TreeGrafter"/>
</dbReference>
<dbReference type="GO" id="GO:0006260">
    <property type="term" value="P:DNA replication"/>
    <property type="evidence" value="ECO:0007669"/>
    <property type="project" value="UniProtKB-KW"/>
</dbReference>
<dbReference type="GO" id="GO:0042026">
    <property type="term" value="P:protein refolding"/>
    <property type="evidence" value="ECO:0007669"/>
    <property type="project" value="TreeGrafter"/>
</dbReference>
<dbReference type="GO" id="GO:0009408">
    <property type="term" value="P:response to heat"/>
    <property type="evidence" value="ECO:0007669"/>
    <property type="project" value="InterPro"/>
</dbReference>
<dbReference type="CDD" id="cd06257">
    <property type="entry name" value="DnaJ"/>
    <property type="match status" value="1"/>
</dbReference>
<dbReference type="CDD" id="cd10747">
    <property type="entry name" value="DnaJ_C"/>
    <property type="match status" value="1"/>
</dbReference>
<dbReference type="CDD" id="cd10719">
    <property type="entry name" value="DnaJ_zf"/>
    <property type="match status" value="1"/>
</dbReference>
<dbReference type="FunFam" id="1.10.287.110:FF:000031">
    <property type="entry name" value="Molecular chaperone DnaJ"/>
    <property type="match status" value="1"/>
</dbReference>
<dbReference type="FunFam" id="2.60.260.20:FF:000004">
    <property type="entry name" value="Molecular chaperone DnaJ"/>
    <property type="match status" value="1"/>
</dbReference>
<dbReference type="FunFam" id="2.60.260.20:FF:000009">
    <property type="entry name" value="Putative Mitochondrial DnaJ chaperone"/>
    <property type="match status" value="1"/>
</dbReference>
<dbReference type="Gene3D" id="6.20.20.10">
    <property type="match status" value="2"/>
</dbReference>
<dbReference type="Gene3D" id="1.10.287.110">
    <property type="entry name" value="DnaJ domain"/>
    <property type="match status" value="1"/>
</dbReference>
<dbReference type="Gene3D" id="2.60.260.20">
    <property type="entry name" value="Urease metallochaperone UreE, N-terminal domain"/>
    <property type="match status" value="2"/>
</dbReference>
<dbReference type="HAMAP" id="MF_01152">
    <property type="entry name" value="DnaJ"/>
    <property type="match status" value="1"/>
</dbReference>
<dbReference type="InterPro" id="IPR012724">
    <property type="entry name" value="DnaJ"/>
</dbReference>
<dbReference type="InterPro" id="IPR002939">
    <property type="entry name" value="DnaJ_C"/>
</dbReference>
<dbReference type="InterPro" id="IPR001623">
    <property type="entry name" value="DnaJ_domain"/>
</dbReference>
<dbReference type="InterPro" id="IPR018253">
    <property type="entry name" value="DnaJ_domain_CS"/>
</dbReference>
<dbReference type="InterPro" id="IPR008971">
    <property type="entry name" value="HSP40/DnaJ_pept-bd"/>
</dbReference>
<dbReference type="InterPro" id="IPR001305">
    <property type="entry name" value="HSP_DnaJ_Cys-rich_dom"/>
</dbReference>
<dbReference type="InterPro" id="IPR036410">
    <property type="entry name" value="HSP_DnaJ_Cys-rich_dom_sf"/>
</dbReference>
<dbReference type="InterPro" id="IPR036869">
    <property type="entry name" value="J_dom_sf"/>
</dbReference>
<dbReference type="NCBIfam" id="TIGR02349">
    <property type="entry name" value="DnaJ_bact"/>
    <property type="match status" value="1"/>
</dbReference>
<dbReference type="NCBIfam" id="NF008035">
    <property type="entry name" value="PRK10767.1"/>
    <property type="match status" value="1"/>
</dbReference>
<dbReference type="NCBIfam" id="NF010873">
    <property type="entry name" value="PRK14280.1"/>
    <property type="match status" value="1"/>
</dbReference>
<dbReference type="PANTHER" id="PTHR43096:SF48">
    <property type="entry name" value="CHAPERONE PROTEIN DNAJ"/>
    <property type="match status" value="1"/>
</dbReference>
<dbReference type="PANTHER" id="PTHR43096">
    <property type="entry name" value="DNAJ HOMOLOG 1, MITOCHONDRIAL-RELATED"/>
    <property type="match status" value="1"/>
</dbReference>
<dbReference type="Pfam" id="PF00226">
    <property type="entry name" value="DnaJ"/>
    <property type="match status" value="1"/>
</dbReference>
<dbReference type="Pfam" id="PF01556">
    <property type="entry name" value="DnaJ_C"/>
    <property type="match status" value="1"/>
</dbReference>
<dbReference type="Pfam" id="PF00684">
    <property type="entry name" value="DnaJ_CXXCXGXG"/>
    <property type="match status" value="1"/>
</dbReference>
<dbReference type="PRINTS" id="PR00625">
    <property type="entry name" value="JDOMAIN"/>
</dbReference>
<dbReference type="SMART" id="SM00271">
    <property type="entry name" value="DnaJ"/>
    <property type="match status" value="1"/>
</dbReference>
<dbReference type="SUPFAM" id="SSF46565">
    <property type="entry name" value="Chaperone J-domain"/>
    <property type="match status" value="1"/>
</dbReference>
<dbReference type="SUPFAM" id="SSF57938">
    <property type="entry name" value="DnaJ/Hsp40 cysteine-rich domain"/>
    <property type="match status" value="1"/>
</dbReference>
<dbReference type="SUPFAM" id="SSF49493">
    <property type="entry name" value="HSP40/DnaJ peptide-binding domain"/>
    <property type="match status" value="2"/>
</dbReference>
<dbReference type="PROSITE" id="PS00636">
    <property type="entry name" value="DNAJ_1"/>
    <property type="match status" value="1"/>
</dbReference>
<dbReference type="PROSITE" id="PS50076">
    <property type="entry name" value="DNAJ_2"/>
    <property type="match status" value="1"/>
</dbReference>
<dbReference type="PROSITE" id="PS51188">
    <property type="entry name" value="ZF_CR"/>
    <property type="match status" value="1"/>
</dbReference>
<feature type="chain" id="PRO_1000137659" description="Chaperone protein DnaJ">
    <location>
        <begin position="1"/>
        <end position="371"/>
    </location>
</feature>
<feature type="domain" description="J" evidence="1">
    <location>
        <begin position="5"/>
        <end position="69"/>
    </location>
</feature>
<feature type="repeat" description="CXXCXGXG motif">
    <location>
        <begin position="146"/>
        <end position="153"/>
    </location>
</feature>
<feature type="repeat" description="CXXCXGXG motif">
    <location>
        <begin position="163"/>
        <end position="170"/>
    </location>
</feature>
<feature type="repeat" description="CXXCXGXG motif">
    <location>
        <begin position="189"/>
        <end position="196"/>
    </location>
</feature>
<feature type="repeat" description="CXXCXGXG motif">
    <location>
        <begin position="203"/>
        <end position="210"/>
    </location>
</feature>
<feature type="zinc finger region" description="CR-type" evidence="1">
    <location>
        <begin position="133"/>
        <end position="215"/>
    </location>
</feature>
<feature type="binding site" evidence="1">
    <location>
        <position position="146"/>
    </location>
    <ligand>
        <name>Zn(2+)</name>
        <dbReference type="ChEBI" id="CHEBI:29105"/>
        <label>1</label>
    </ligand>
</feature>
<feature type="binding site" evidence="1">
    <location>
        <position position="149"/>
    </location>
    <ligand>
        <name>Zn(2+)</name>
        <dbReference type="ChEBI" id="CHEBI:29105"/>
        <label>1</label>
    </ligand>
</feature>
<feature type="binding site" evidence="1">
    <location>
        <position position="163"/>
    </location>
    <ligand>
        <name>Zn(2+)</name>
        <dbReference type="ChEBI" id="CHEBI:29105"/>
        <label>2</label>
    </ligand>
</feature>
<feature type="binding site" evidence="1">
    <location>
        <position position="166"/>
    </location>
    <ligand>
        <name>Zn(2+)</name>
        <dbReference type="ChEBI" id="CHEBI:29105"/>
        <label>2</label>
    </ligand>
</feature>
<feature type="binding site" evidence="1">
    <location>
        <position position="189"/>
    </location>
    <ligand>
        <name>Zn(2+)</name>
        <dbReference type="ChEBI" id="CHEBI:29105"/>
        <label>2</label>
    </ligand>
</feature>
<feature type="binding site" evidence="1">
    <location>
        <position position="192"/>
    </location>
    <ligand>
        <name>Zn(2+)</name>
        <dbReference type="ChEBI" id="CHEBI:29105"/>
        <label>2</label>
    </ligand>
</feature>
<feature type="binding site" evidence="1">
    <location>
        <position position="203"/>
    </location>
    <ligand>
        <name>Zn(2+)</name>
        <dbReference type="ChEBI" id="CHEBI:29105"/>
        <label>1</label>
    </ligand>
</feature>
<feature type="binding site" evidence="1">
    <location>
        <position position="206"/>
    </location>
    <ligand>
        <name>Zn(2+)</name>
        <dbReference type="ChEBI" id="CHEBI:29105"/>
        <label>1</label>
    </ligand>
</feature>